<feature type="chain" id="PRO_0000204164" description="Arginine exporter protein ArgO">
    <location>
        <begin position="1"/>
        <end position="211"/>
    </location>
</feature>
<feature type="transmembrane region" description="Helical" evidence="1">
    <location>
        <begin position="1"/>
        <end position="21"/>
    </location>
</feature>
<feature type="transmembrane region" description="Helical" evidence="1">
    <location>
        <begin position="37"/>
        <end position="57"/>
    </location>
</feature>
<feature type="transmembrane region" description="Helical" evidence="1">
    <location>
        <begin position="68"/>
        <end position="88"/>
    </location>
</feature>
<feature type="transmembrane region" description="Helical" evidence="1">
    <location>
        <begin position="111"/>
        <end position="131"/>
    </location>
</feature>
<feature type="transmembrane region" description="Helical" evidence="1">
    <location>
        <begin position="147"/>
        <end position="167"/>
    </location>
</feature>
<feature type="transmembrane region" description="Helical" evidence="1">
    <location>
        <begin position="179"/>
        <end position="199"/>
    </location>
</feature>
<organism>
    <name type="scientific">Salmonella paratyphi A (strain ATCC 9150 / SARB42)</name>
    <dbReference type="NCBI Taxonomy" id="295319"/>
    <lineage>
        <taxon>Bacteria</taxon>
        <taxon>Pseudomonadati</taxon>
        <taxon>Pseudomonadota</taxon>
        <taxon>Gammaproteobacteria</taxon>
        <taxon>Enterobacterales</taxon>
        <taxon>Enterobacteriaceae</taxon>
        <taxon>Salmonella</taxon>
    </lineage>
</organism>
<protein>
    <recommendedName>
        <fullName evidence="1">Arginine exporter protein ArgO</fullName>
    </recommendedName>
</protein>
<dbReference type="EMBL" id="CP000026">
    <property type="protein sequence ID" value="AAV78775.1"/>
    <property type="molecule type" value="Genomic_DNA"/>
</dbReference>
<dbReference type="RefSeq" id="WP_000626872.1">
    <property type="nucleotide sequence ID" value="NC_006511.1"/>
</dbReference>
<dbReference type="KEGG" id="spt:SPA2937"/>
<dbReference type="HOGENOM" id="CLU_087840_0_1_6"/>
<dbReference type="Proteomes" id="UP000008185">
    <property type="component" value="Chromosome"/>
</dbReference>
<dbReference type="GO" id="GO:0005886">
    <property type="term" value="C:plasma membrane"/>
    <property type="evidence" value="ECO:0007669"/>
    <property type="project" value="UniProtKB-SubCell"/>
</dbReference>
<dbReference type="GO" id="GO:0061459">
    <property type="term" value="F:L-arginine transmembrane transporter activity"/>
    <property type="evidence" value="ECO:0007669"/>
    <property type="project" value="UniProtKB-UniRule"/>
</dbReference>
<dbReference type="HAMAP" id="MF_01901">
    <property type="entry name" value="ArgO"/>
    <property type="match status" value="1"/>
</dbReference>
<dbReference type="InterPro" id="IPR023445">
    <property type="entry name" value="Arg_export_ArgO_enterobac"/>
</dbReference>
<dbReference type="InterPro" id="IPR001123">
    <property type="entry name" value="LeuE-type"/>
</dbReference>
<dbReference type="InterPro" id="IPR004777">
    <property type="entry name" value="Lys/arg_exporter"/>
</dbReference>
<dbReference type="NCBIfam" id="TIGR00948">
    <property type="entry name" value="2a75"/>
    <property type="match status" value="1"/>
</dbReference>
<dbReference type="NCBIfam" id="NF006801">
    <property type="entry name" value="PRK09304.1"/>
    <property type="match status" value="1"/>
</dbReference>
<dbReference type="PANTHER" id="PTHR30086">
    <property type="entry name" value="ARGININE EXPORTER PROTEIN ARGO"/>
    <property type="match status" value="1"/>
</dbReference>
<dbReference type="PANTHER" id="PTHR30086:SF20">
    <property type="entry name" value="ARGININE EXPORTER PROTEIN ARGO-RELATED"/>
    <property type="match status" value="1"/>
</dbReference>
<dbReference type="Pfam" id="PF01810">
    <property type="entry name" value="LysE"/>
    <property type="match status" value="1"/>
</dbReference>
<reference key="1">
    <citation type="journal article" date="2004" name="Nat. Genet.">
        <title>Comparison of genome degradation in Paratyphi A and Typhi, human-restricted serovars of Salmonella enterica that cause typhoid.</title>
        <authorList>
            <person name="McClelland M."/>
            <person name="Sanderson K.E."/>
            <person name="Clifton S.W."/>
            <person name="Latreille P."/>
            <person name="Porwollik S."/>
            <person name="Sabo A."/>
            <person name="Meyer R."/>
            <person name="Bieri T."/>
            <person name="Ozersky P."/>
            <person name="McLellan M."/>
            <person name="Harkins C.R."/>
            <person name="Wang C."/>
            <person name="Nguyen C."/>
            <person name="Berghoff A."/>
            <person name="Elliott G."/>
            <person name="Kohlberg S."/>
            <person name="Strong C."/>
            <person name="Du F."/>
            <person name="Carter J."/>
            <person name="Kremizki C."/>
            <person name="Layman D."/>
            <person name="Leonard S."/>
            <person name="Sun H."/>
            <person name="Fulton L."/>
            <person name="Nash W."/>
            <person name="Miner T."/>
            <person name="Minx P."/>
            <person name="Delehaunty K."/>
            <person name="Fronick C."/>
            <person name="Magrini V."/>
            <person name="Nhan M."/>
            <person name="Warren W."/>
            <person name="Florea L."/>
            <person name="Spieth J."/>
            <person name="Wilson R.K."/>
        </authorList>
    </citation>
    <scope>NUCLEOTIDE SEQUENCE [LARGE SCALE GENOMIC DNA]</scope>
    <source>
        <strain>ATCC 9150 / SARB42</strain>
    </source>
</reference>
<comment type="function">
    <text evidence="1">Involved in the export of arginine. Important to control the intracellular level of arginine and the correct balance between arginine and lysine.</text>
</comment>
<comment type="catalytic activity">
    <reaction evidence="1">
        <text>L-arginine(in) = L-arginine(out)</text>
        <dbReference type="Rhea" id="RHEA:32143"/>
        <dbReference type="ChEBI" id="CHEBI:32682"/>
    </reaction>
    <physiologicalReaction direction="left-to-right" evidence="1">
        <dbReference type="Rhea" id="RHEA:32144"/>
    </physiologicalReaction>
</comment>
<comment type="subcellular location">
    <subcellularLocation>
        <location evidence="1">Cell inner membrane</location>
        <topology evidence="1">Multi-pass membrane protein</topology>
    </subcellularLocation>
</comment>
<comment type="similarity">
    <text evidence="1 2">Belongs to the LysE/ArgO transporter (TC 2.A.75) family.</text>
</comment>
<gene>
    <name evidence="1" type="primary">argO</name>
    <name type="ordered locus">SPA2937</name>
</gene>
<accession>Q5PJI9</accession>
<name>ARGO_SALPA</name>
<proteinExistence type="inferred from homology"/>
<evidence type="ECO:0000255" key="1">
    <source>
        <dbReference type="HAMAP-Rule" id="MF_01901"/>
    </source>
</evidence>
<evidence type="ECO:0000305" key="2"/>
<keyword id="KW-0029">Amino-acid transport</keyword>
<keyword id="KW-0997">Cell inner membrane</keyword>
<keyword id="KW-1003">Cell membrane</keyword>
<keyword id="KW-0472">Membrane</keyword>
<keyword id="KW-0812">Transmembrane</keyword>
<keyword id="KW-1133">Transmembrane helix</keyword>
<keyword id="KW-0813">Transport</keyword>
<sequence>MISYYFQGFALGVAMILPLGPQNAFVMNQGIRRQYHLMIALLCALSDLVLISAGIFGGSALLMQSPWLLALVTWGGVAFLLWYGFGALKTAMSSNLELASAEVMKQGRWKIIATMLAVTWLNPHVYLDTFVVLGSLGGQLAMEPKRWFALGTISASFLWFFGLALLAAWLAPRLRTAKAQRIINILVGVVMWLIAFQLAREGVAHMHALFN</sequence>